<name>RL16_NITOC</name>
<evidence type="ECO:0000255" key="1">
    <source>
        <dbReference type="HAMAP-Rule" id="MF_01342"/>
    </source>
</evidence>
<evidence type="ECO:0000256" key="2">
    <source>
        <dbReference type="SAM" id="MobiDB-lite"/>
    </source>
</evidence>
<evidence type="ECO:0000305" key="3"/>
<proteinExistence type="inferred from homology"/>
<comment type="function">
    <text evidence="1">Binds 23S rRNA and is also seen to make contacts with the A and possibly P site tRNAs.</text>
</comment>
<comment type="subunit">
    <text evidence="1">Part of the 50S ribosomal subunit.</text>
</comment>
<comment type="similarity">
    <text evidence="1">Belongs to the universal ribosomal protein uL16 family.</text>
</comment>
<feature type="chain" id="PRO_0000062155" description="Large ribosomal subunit protein uL16">
    <location>
        <begin position="1"/>
        <end position="137"/>
    </location>
</feature>
<feature type="region of interest" description="Disordered" evidence="2">
    <location>
        <begin position="1"/>
        <end position="21"/>
    </location>
</feature>
<feature type="compositionally biased region" description="Basic residues" evidence="2">
    <location>
        <begin position="1"/>
        <end position="17"/>
    </location>
</feature>
<gene>
    <name evidence="1" type="primary">rplP</name>
    <name type="ordered locus">Noc_2317</name>
</gene>
<reference key="1">
    <citation type="journal article" date="2006" name="Appl. Environ. Microbiol.">
        <title>Complete genome sequence of the marine, chemolithoautotrophic, ammonia-oxidizing bacterium Nitrosococcus oceani ATCC 19707.</title>
        <authorList>
            <person name="Klotz M.G."/>
            <person name="Arp D.J."/>
            <person name="Chain P.S.G."/>
            <person name="El-Sheikh A.F."/>
            <person name="Hauser L.J."/>
            <person name="Hommes N.G."/>
            <person name="Larimer F.W."/>
            <person name="Malfatti S.A."/>
            <person name="Norton J.M."/>
            <person name="Poret-Peterson A.T."/>
            <person name="Vergez L.M."/>
            <person name="Ward B.B."/>
        </authorList>
    </citation>
    <scope>NUCLEOTIDE SEQUENCE [LARGE SCALE GENOMIC DNA]</scope>
    <source>
        <strain>ATCC 19707 / BCRC 17464 / JCM 30415 / NCIMB 11848 / C-107</strain>
    </source>
</reference>
<organism>
    <name type="scientific">Nitrosococcus oceani (strain ATCC 19707 / BCRC 17464 / JCM 30415 / NCIMB 11848 / C-107)</name>
    <dbReference type="NCBI Taxonomy" id="323261"/>
    <lineage>
        <taxon>Bacteria</taxon>
        <taxon>Pseudomonadati</taxon>
        <taxon>Pseudomonadota</taxon>
        <taxon>Gammaproteobacteria</taxon>
        <taxon>Chromatiales</taxon>
        <taxon>Chromatiaceae</taxon>
        <taxon>Nitrosococcus</taxon>
    </lineage>
</organism>
<sequence length="137" mass="15509">MLQPKRTKFRKQQKGRNRGQALRGSQIDFGEYGLKAIGRGRITARQIEAARRAMTRHIKRGGKIWIRIFPDKPITQKPLEVRQGKGKGGVEFWAANIQPGRVLYEMEGVPEGVARRAFELAAAKLPIKTVFVTRAIM</sequence>
<dbReference type="EMBL" id="CP000127">
    <property type="protein sequence ID" value="ABA58775.1"/>
    <property type="molecule type" value="Genomic_DNA"/>
</dbReference>
<dbReference type="RefSeq" id="WP_011330924.1">
    <property type="nucleotide sequence ID" value="NC_007484.1"/>
</dbReference>
<dbReference type="SMR" id="Q3J8S1"/>
<dbReference type="FunCoup" id="Q3J8S1">
    <property type="interactions" value="593"/>
</dbReference>
<dbReference type="STRING" id="323261.Noc_2317"/>
<dbReference type="KEGG" id="noc:Noc_2317"/>
<dbReference type="eggNOG" id="COG0197">
    <property type="taxonomic scope" value="Bacteria"/>
</dbReference>
<dbReference type="HOGENOM" id="CLU_078858_2_1_6"/>
<dbReference type="InParanoid" id="Q3J8S1"/>
<dbReference type="Proteomes" id="UP000006838">
    <property type="component" value="Chromosome"/>
</dbReference>
<dbReference type="GO" id="GO:0022625">
    <property type="term" value="C:cytosolic large ribosomal subunit"/>
    <property type="evidence" value="ECO:0007669"/>
    <property type="project" value="TreeGrafter"/>
</dbReference>
<dbReference type="GO" id="GO:0019843">
    <property type="term" value="F:rRNA binding"/>
    <property type="evidence" value="ECO:0007669"/>
    <property type="project" value="UniProtKB-UniRule"/>
</dbReference>
<dbReference type="GO" id="GO:0003735">
    <property type="term" value="F:structural constituent of ribosome"/>
    <property type="evidence" value="ECO:0007669"/>
    <property type="project" value="InterPro"/>
</dbReference>
<dbReference type="GO" id="GO:0000049">
    <property type="term" value="F:tRNA binding"/>
    <property type="evidence" value="ECO:0007669"/>
    <property type="project" value="UniProtKB-KW"/>
</dbReference>
<dbReference type="GO" id="GO:0006412">
    <property type="term" value="P:translation"/>
    <property type="evidence" value="ECO:0007669"/>
    <property type="project" value="UniProtKB-UniRule"/>
</dbReference>
<dbReference type="CDD" id="cd01433">
    <property type="entry name" value="Ribosomal_L16_L10e"/>
    <property type="match status" value="1"/>
</dbReference>
<dbReference type="FunFam" id="3.90.1170.10:FF:000001">
    <property type="entry name" value="50S ribosomal protein L16"/>
    <property type="match status" value="1"/>
</dbReference>
<dbReference type="Gene3D" id="3.90.1170.10">
    <property type="entry name" value="Ribosomal protein L10e/L16"/>
    <property type="match status" value="1"/>
</dbReference>
<dbReference type="HAMAP" id="MF_01342">
    <property type="entry name" value="Ribosomal_uL16"/>
    <property type="match status" value="1"/>
</dbReference>
<dbReference type="InterPro" id="IPR047873">
    <property type="entry name" value="Ribosomal_uL16"/>
</dbReference>
<dbReference type="InterPro" id="IPR000114">
    <property type="entry name" value="Ribosomal_uL16_bact-type"/>
</dbReference>
<dbReference type="InterPro" id="IPR020798">
    <property type="entry name" value="Ribosomal_uL16_CS"/>
</dbReference>
<dbReference type="InterPro" id="IPR016180">
    <property type="entry name" value="Ribosomal_uL16_dom"/>
</dbReference>
<dbReference type="InterPro" id="IPR036920">
    <property type="entry name" value="Ribosomal_uL16_sf"/>
</dbReference>
<dbReference type="NCBIfam" id="TIGR01164">
    <property type="entry name" value="rplP_bact"/>
    <property type="match status" value="1"/>
</dbReference>
<dbReference type="PANTHER" id="PTHR12220">
    <property type="entry name" value="50S/60S RIBOSOMAL PROTEIN L16"/>
    <property type="match status" value="1"/>
</dbReference>
<dbReference type="PANTHER" id="PTHR12220:SF13">
    <property type="entry name" value="LARGE RIBOSOMAL SUBUNIT PROTEIN UL16M"/>
    <property type="match status" value="1"/>
</dbReference>
<dbReference type="Pfam" id="PF00252">
    <property type="entry name" value="Ribosomal_L16"/>
    <property type="match status" value="1"/>
</dbReference>
<dbReference type="PRINTS" id="PR00060">
    <property type="entry name" value="RIBOSOMALL16"/>
</dbReference>
<dbReference type="SUPFAM" id="SSF54686">
    <property type="entry name" value="Ribosomal protein L16p/L10e"/>
    <property type="match status" value="1"/>
</dbReference>
<dbReference type="PROSITE" id="PS00586">
    <property type="entry name" value="RIBOSOMAL_L16_1"/>
    <property type="match status" value="1"/>
</dbReference>
<keyword id="KW-1185">Reference proteome</keyword>
<keyword id="KW-0687">Ribonucleoprotein</keyword>
<keyword id="KW-0689">Ribosomal protein</keyword>
<keyword id="KW-0694">RNA-binding</keyword>
<keyword id="KW-0699">rRNA-binding</keyword>
<keyword id="KW-0820">tRNA-binding</keyword>
<protein>
    <recommendedName>
        <fullName evidence="1">Large ribosomal subunit protein uL16</fullName>
    </recommendedName>
    <alternativeName>
        <fullName evidence="3">50S ribosomal protein L16</fullName>
    </alternativeName>
</protein>
<accession>Q3J8S1</accession>